<accession>C0RJH7</accession>
<proteinExistence type="inferred from homology"/>
<comment type="function">
    <text evidence="1">Located on the platform of the 30S subunit, it bridges several disparate RNA helices of the 16S rRNA. Forms part of the Shine-Dalgarno cleft in the 70S ribosome.</text>
</comment>
<comment type="subunit">
    <text evidence="1">Part of the 30S ribosomal subunit. Interacts with proteins S7 and S18. Binds to IF-3.</text>
</comment>
<comment type="similarity">
    <text evidence="1">Belongs to the universal ribosomal protein uS11 family.</text>
</comment>
<reference key="1">
    <citation type="submission" date="2009-03" db="EMBL/GenBank/DDBJ databases">
        <title>Brucella melitensis ATCC 23457 whole genome shotgun sequencing project.</title>
        <authorList>
            <person name="Setubal J.C."/>
            <person name="Boyle S."/>
            <person name="Crasta O.R."/>
            <person name="Gillespie J.J."/>
            <person name="Kenyon R.W."/>
            <person name="Lu J."/>
            <person name="Mane S."/>
            <person name="Nagrani S."/>
            <person name="Shallom J.M."/>
            <person name="Shallom S."/>
            <person name="Shukla M."/>
            <person name="Snyder E.E."/>
            <person name="Sobral B.W."/>
            <person name="Wattam A.R."/>
            <person name="Will R."/>
            <person name="Williams K."/>
            <person name="Yoo H."/>
            <person name="Munk C."/>
            <person name="Tapia R."/>
            <person name="Han C."/>
            <person name="Detter J.C."/>
            <person name="Bruce D."/>
            <person name="Brettin T.S."/>
        </authorList>
    </citation>
    <scope>NUCLEOTIDE SEQUENCE [LARGE SCALE GENOMIC DNA]</scope>
    <source>
        <strain>ATCC 23457</strain>
    </source>
</reference>
<feature type="chain" id="PRO_1000165534" description="Small ribosomal subunit protein uS11">
    <location>
        <begin position="1"/>
        <end position="129"/>
    </location>
</feature>
<organism>
    <name type="scientific">Brucella melitensis biotype 2 (strain ATCC 23457)</name>
    <dbReference type="NCBI Taxonomy" id="546272"/>
    <lineage>
        <taxon>Bacteria</taxon>
        <taxon>Pseudomonadati</taxon>
        <taxon>Pseudomonadota</taxon>
        <taxon>Alphaproteobacteria</taxon>
        <taxon>Hyphomicrobiales</taxon>
        <taxon>Brucellaceae</taxon>
        <taxon>Brucella/Ochrobactrum group</taxon>
        <taxon>Brucella</taxon>
    </lineage>
</organism>
<gene>
    <name evidence="1" type="primary">rpsK</name>
    <name type="ordered locus">BMEA_A1254</name>
</gene>
<evidence type="ECO:0000255" key="1">
    <source>
        <dbReference type="HAMAP-Rule" id="MF_01310"/>
    </source>
</evidence>
<evidence type="ECO:0000305" key="2"/>
<sequence>MAKEATRVRRRERKNISSGVAHVNSTFNNTMITITDAQGNAIAWSSAGAQGFKGSRKSTPFAAQIAAEDCAKKAQEHGMRSLEVEVCGPGSGRESALRALQAAGFVITSIRDVTPIPHNGCRPRKKRRV</sequence>
<protein>
    <recommendedName>
        <fullName evidence="1">Small ribosomal subunit protein uS11</fullName>
    </recommendedName>
    <alternativeName>
        <fullName evidence="2">30S ribosomal protein S11</fullName>
    </alternativeName>
</protein>
<name>RS11_BRUMB</name>
<keyword id="KW-0687">Ribonucleoprotein</keyword>
<keyword id="KW-0689">Ribosomal protein</keyword>
<keyword id="KW-0694">RNA-binding</keyword>
<keyword id="KW-0699">rRNA-binding</keyword>
<dbReference type="EMBL" id="CP001488">
    <property type="protein sequence ID" value="ACO00985.1"/>
    <property type="molecule type" value="Genomic_DNA"/>
</dbReference>
<dbReference type="RefSeq" id="WP_002964339.1">
    <property type="nucleotide sequence ID" value="NC_012441.1"/>
</dbReference>
<dbReference type="SMR" id="C0RJH7"/>
<dbReference type="GeneID" id="97533547"/>
<dbReference type="KEGG" id="bmi:BMEA_A1254"/>
<dbReference type="HOGENOM" id="CLU_072439_5_0_5"/>
<dbReference type="Proteomes" id="UP000001748">
    <property type="component" value="Chromosome I"/>
</dbReference>
<dbReference type="GO" id="GO:1990904">
    <property type="term" value="C:ribonucleoprotein complex"/>
    <property type="evidence" value="ECO:0007669"/>
    <property type="project" value="UniProtKB-KW"/>
</dbReference>
<dbReference type="GO" id="GO:0005840">
    <property type="term" value="C:ribosome"/>
    <property type="evidence" value="ECO:0007669"/>
    <property type="project" value="UniProtKB-KW"/>
</dbReference>
<dbReference type="GO" id="GO:0019843">
    <property type="term" value="F:rRNA binding"/>
    <property type="evidence" value="ECO:0007669"/>
    <property type="project" value="UniProtKB-UniRule"/>
</dbReference>
<dbReference type="GO" id="GO:0003735">
    <property type="term" value="F:structural constituent of ribosome"/>
    <property type="evidence" value="ECO:0007669"/>
    <property type="project" value="InterPro"/>
</dbReference>
<dbReference type="GO" id="GO:0006412">
    <property type="term" value="P:translation"/>
    <property type="evidence" value="ECO:0007669"/>
    <property type="project" value="UniProtKB-UniRule"/>
</dbReference>
<dbReference type="FunFam" id="3.30.420.80:FF:000001">
    <property type="entry name" value="30S ribosomal protein S11"/>
    <property type="match status" value="1"/>
</dbReference>
<dbReference type="Gene3D" id="3.30.420.80">
    <property type="entry name" value="Ribosomal protein S11"/>
    <property type="match status" value="1"/>
</dbReference>
<dbReference type="HAMAP" id="MF_01310">
    <property type="entry name" value="Ribosomal_uS11"/>
    <property type="match status" value="1"/>
</dbReference>
<dbReference type="InterPro" id="IPR001971">
    <property type="entry name" value="Ribosomal_uS11"/>
</dbReference>
<dbReference type="InterPro" id="IPR019981">
    <property type="entry name" value="Ribosomal_uS11_bac-type"/>
</dbReference>
<dbReference type="InterPro" id="IPR018102">
    <property type="entry name" value="Ribosomal_uS11_CS"/>
</dbReference>
<dbReference type="InterPro" id="IPR036967">
    <property type="entry name" value="Ribosomal_uS11_sf"/>
</dbReference>
<dbReference type="NCBIfam" id="NF003698">
    <property type="entry name" value="PRK05309.1"/>
    <property type="match status" value="1"/>
</dbReference>
<dbReference type="NCBIfam" id="TIGR03632">
    <property type="entry name" value="uS11_bact"/>
    <property type="match status" value="1"/>
</dbReference>
<dbReference type="PANTHER" id="PTHR11759">
    <property type="entry name" value="40S RIBOSOMAL PROTEIN S14/30S RIBOSOMAL PROTEIN S11"/>
    <property type="match status" value="1"/>
</dbReference>
<dbReference type="Pfam" id="PF00411">
    <property type="entry name" value="Ribosomal_S11"/>
    <property type="match status" value="1"/>
</dbReference>
<dbReference type="PIRSF" id="PIRSF002131">
    <property type="entry name" value="Ribosomal_S11"/>
    <property type="match status" value="1"/>
</dbReference>
<dbReference type="SUPFAM" id="SSF53137">
    <property type="entry name" value="Translational machinery components"/>
    <property type="match status" value="1"/>
</dbReference>
<dbReference type="PROSITE" id="PS00054">
    <property type="entry name" value="RIBOSOMAL_S11"/>
    <property type="match status" value="1"/>
</dbReference>